<comment type="function">
    <text>Electron carrier between complex III (ubiquinol-cytochrome c oxireductase) and complex IV (cytochrome c oxidase).</text>
</comment>
<comment type="biophysicochemical properties">
    <redoxPotential>
        <text>E(0) is +248 mV.</text>
    </redoxPotential>
</comment>
<comment type="subcellular location">
    <subcellularLocation>
        <location>Mitochondrion intermembrane space</location>
    </subcellularLocation>
    <text>Loosely associated with the inner membrane.</text>
</comment>
<comment type="developmental stage">
    <text>Found in the mitochondria from unembryonated eggs, and in second-, third-, and fourth-stage larvae. Highest expression found in second-stage larvae. Reaches undetectable levels in the adult.</text>
</comment>
<comment type="PTM">
    <text>Binds 1 heme c group covalently per subunit.</text>
</comment>
<comment type="mass spectrometry"/>
<comment type="similarity">
    <text evidence="3">Belongs to the cytochrome c family.</text>
</comment>
<comment type="online information" name="Protein Spotlight">
    <link uri="https://www.proteinspotlight.org/back_issues/076"/>
    <text>Life shuttle - Issue 76 of November 2006</text>
</comment>
<reference key="1">
    <citation type="journal article" date="1996" name="Mol. Biochem. Parasitol.">
        <title>cDNA cloning for mitochondrial cytochrome c and its adult-specific isoform from Ascaris suum.</title>
        <authorList>
            <person name="Takamiya S."/>
            <person name="Hirawake H."/>
            <person name="Kuramochi T."/>
            <person name="Aoki T."/>
            <person name="Kojima S."/>
            <person name="Kita K."/>
        </authorList>
    </citation>
    <scope>NUCLEOTIDE SEQUENCE [MRNA]</scope>
    <source>
        <tissue>Muscle</tissue>
    </source>
</reference>
<reference key="2">
    <citation type="journal article" date="1996" name="Mol. Biochem. Parasitol.">
        <title>Molecular and functional properties of cytochrome c from adult Ascaris suum muscle.</title>
        <authorList>
            <person name="Takamiya S."/>
            <person name="Yu Y."/>
            <person name="Cavaleante M.E."/>
            <person name="Murayama K."/>
            <person name="Taka H."/>
            <person name="Tateno S."/>
            <person name="Takeuchi T."/>
            <person name="Aoki T."/>
        </authorList>
    </citation>
    <scope>CHARACTERIZATION</scope>
    <scope>PROTEIN SEQUENCE OF 2-34</scope>
    <scope>MASS SPECTROMETRY</scope>
</reference>
<proteinExistence type="evidence at protein level"/>
<keyword id="KW-0903">Direct protein sequencing</keyword>
<keyword id="KW-0249">Electron transport</keyword>
<keyword id="KW-0349">Heme</keyword>
<keyword id="KW-0408">Iron</keyword>
<keyword id="KW-0479">Metal-binding</keyword>
<keyword id="KW-0496">Mitochondrion</keyword>
<keyword id="KW-0679">Respiratory chain</keyword>
<keyword id="KW-0813">Transport</keyword>
<dbReference type="EMBL" id="D73391">
    <property type="protein sequence ID" value="BAA11131.1"/>
    <property type="status" value="ALT_TERM"/>
    <property type="molecule type" value="mRNA"/>
</dbReference>
<dbReference type="SMR" id="P92504"/>
<dbReference type="GO" id="GO:0005758">
    <property type="term" value="C:mitochondrial intermembrane space"/>
    <property type="evidence" value="ECO:0007669"/>
    <property type="project" value="UniProtKB-SubCell"/>
</dbReference>
<dbReference type="GO" id="GO:0009055">
    <property type="term" value="F:electron transfer activity"/>
    <property type="evidence" value="ECO:0007669"/>
    <property type="project" value="InterPro"/>
</dbReference>
<dbReference type="GO" id="GO:0020037">
    <property type="term" value="F:heme binding"/>
    <property type="evidence" value="ECO:0007669"/>
    <property type="project" value="InterPro"/>
</dbReference>
<dbReference type="GO" id="GO:0046872">
    <property type="term" value="F:metal ion binding"/>
    <property type="evidence" value="ECO:0007669"/>
    <property type="project" value="UniProtKB-KW"/>
</dbReference>
<dbReference type="FunFam" id="1.10.760.10:FF:000014">
    <property type="entry name" value="Cytochrome c"/>
    <property type="match status" value="1"/>
</dbReference>
<dbReference type="Gene3D" id="1.10.760.10">
    <property type="entry name" value="Cytochrome c-like domain"/>
    <property type="match status" value="1"/>
</dbReference>
<dbReference type="InterPro" id="IPR009056">
    <property type="entry name" value="Cyt_c-like_dom"/>
</dbReference>
<dbReference type="InterPro" id="IPR036909">
    <property type="entry name" value="Cyt_c-like_dom_sf"/>
</dbReference>
<dbReference type="InterPro" id="IPR002327">
    <property type="entry name" value="Cyt_c_1A/1B"/>
</dbReference>
<dbReference type="PANTHER" id="PTHR11961">
    <property type="entry name" value="CYTOCHROME C"/>
    <property type="match status" value="1"/>
</dbReference>
<dbReference type="Pfam" id="PF00034">
    <property type="entry name" value="Cytochrom_C"/>
    <property type="match status" value="1"/>
</dbReference>
<dbReference type="PRINTS" id="PR00604">
    <property type="entry name" value="CYTCHRMECIAB"/>
</dbReference>
<dbReference type="SUPFAM" id="SSF46626">
    <property type="entry name" value="Cytochrome c"/>
    <property type="match status" value="1"/>
</dbReference>
<dbReference type="PROSITE" id="PS51007">
    <property type="entry name" value="CYTC"/>
    <property type="match status" value="1"/>
</dbReference>
<protein>
    <recommendedName>
        <fullName>Cytochrome c type-1</fullName>
    </recommendedName>
</protein>
<feature type="initiator methionine" description="Removed" evidence="2">
    <location>
        <position position="1"/>
    </location>
</feature>
<feature type="chain" id="PRO_0000108268" description="Cytochrome c type-1">
    <location>
        <begin position="2"/>
        <end position="112"/>
    </location>
</feature>
<feature type="binding site" description="covalent" evidence="1">
    <location>
        <position position="20"/>
    </location>
    <ligand>
        <name>heme c</name>
        <dbReference type="ChEBI" id="CHEBI:61717"/>
    </ligand>
</feature>
<feature type="binding site" description="covalent" evidence="1">
    <location>
        <position position="23"/>
    </location>
    <ligand>
        <name>heme c</name>
        <dbReference type="ChEBI" id="CHEBI:61717"/>
    </ligand>
</feature>
<feature type="binding site" description="axial binding residue" evidence="1">
    <location>
        <position position="24"/>
    </location>
    <ligand>
        <name>heme c</name>
        <dbReference type="ChEBI" id="CHEBI:61717"/>
    </ligand>
    <ligandPart>
        <name>Fe</name>
        <dbReference type="ChEBI" id="CHEBI:18248"/>
    </ligandPart>
</feature>
<feature type="binding site" description="axial binding residue" evidence="1">
    <location>
        <position position="85"/>
    </location>
    <ligand>
        <name>heme c</name>
        <dbReference type="ChEBI" id="CHEBI:61717"/>
    </ligand>
    <ligandPart>
        <name>Fe</name>
        <dbReference type="ChEBI" id="CHEBI:18248"/>
    </ligandPart>
</feature>
<feature type="sequence conflict" description="In Ref. 2; AA sequence." evidence="3" ref="2">
    <original>S</original>
    <variation>R</variation>
    <location>
        <position position="11"/>
    </location>
</feature>
<accession>P92504</accession>
<sequence>MPEIPEGDYESGKKVFKQRCLQCHVVDSKATKTGPTLHGIIGRKSGAVPGFDYSTANKNKGVVWTRETLFEYLLNPKKYIPGTKMVFAGLKKADERADLIKYIEEECKKPIS</sequence>
<name>CYC1_ASCSU</name>
<organism>
    <name type="scientific">Ascaris suum</name>
    <name type="common">Pig roundworm</name>
    <name type="synonym">Ascaris lumbricoides</name>
    <dbReference type="NCBI Taxonomy" id="6253"/>
    <lineage>
        <taxon>Eukaryota</taxon>
        <taxon>Metazoa</taxon>
        <taxon>Ecdysozoa</taxon>
        <taxon>Nematoda</taxon>
        <taxon>Chromadorea</taxon>
        <taxon>Rhabditida</taxon>
        <taxon>Spirurina</taxon>
        <taxon>Ascaridomorpha</taxon>
        <taxon>Ascaridoidea</taxon>
        <taxon>Ascarididae</taxon>
        <taxon>Ascaris</taxon>
    </lineage>
</organism>
<evidence type="ECO:0000255" key="1">
    <source>
        <dbReference type="PROSITE-ProRule" id="PRU00433"/>
    </source>
</evidence>
<evidence type="ECO:0000269" key="2">
    <source>
    </source>
</evidence>
<evidence type="ECO:0000305" key="3"/>